<gene>
    <name evidence="1" type="primary">rpoY</name>
    <name type="ordered locus">M6_Spy1605</name>
</gene>
<name>RPOY_STRP6</name>
<feature type="chain" id="PRO_0000163153" description="DNA-directed RNA polymerase subunit epsilon">
    <location>
        <begin position="1"/>
        <end position="76"/>
    </location>
</feature>
<accession>Q5XA23</accession>
<accession>P82586</accession>
<keyword id="KW-0903">Direct protein sequencing</keyword>
<keyword id="KW-0240">DNA-directed RNA polymerase</keyword>
<keyword id="KW-0548">Nucleotidyltransferase</keyword>
<keyword id="KW-0804">Transcription</keyword>
<keyword id="KW-0808">Transferase</keyword>
<dbReference type="EC" id="2.7.7.6" evidence="1"/>
<dbReference type="EMBL" id="CP000003">
    <property type="protein sequence ID" value="AAT87740.1"/>
    <property type="molecule type" value="Genomic_DNA"/>
</dbReference>
<dbReference type="RefSeq" id="WP_002982907.1">
    <property type="nucleotide sequence ID" value="NC_006086.1"/>
</dbReference>
<dbReference type="SMR" id="Q5XA23"/>
<dbReference type="KEGG" id="spa:M6_Spy1605"/>
<dbReference type="HOGENOM" id="CLU_187518_0_0_9"/>
<dbReference type="Proteomes" id="UP000001167">
    <property type="component" value="Chromosome"/>
</dbReference>
<dbReference type="GO" id="GO:0000428">
    <property type="term" value="C:DNA-directed RNA polymerase complex"/>
    <property type="evidence" value="ECO:0007669"/>
    <property type="project" value="UniProtKB-KW"/>
</dbReference>
<dbReference type="GO" id="GO:0003677">
    <property type="term" value="F:DNA binding"/>
    <property type="evidence" value="ECO:0007669"/>
    <property type="project" value="UniProtKB-UniRule"/>
</dbReference>
<dbReference type="GO" id="GO:0003899">
    <property type="term" value="F:DNA-directed RNA polymerase activity"/>
    <property type="evidence" value="ECO:0007669"/>
    <property type="project" value="UniProtKB-UniRule"/>
</dbReference>
<dbReference type="GO" id="GO:0006351">
    <property type="term" value="P:DNA-templated transcription"/>
    <property type="evidence" value="ECO:0007669"/>
    <property type="project" value="UniProtKB-UniRule"/>
</dbReference>
<dbReference type="Gene3D" id="3.10.20.730">
    <property type="entry name" value="RNAP, epsilon subunit-like"/>
    <property type="match status" value="1"/>
</dbReference>
<dbReference type="HAMAP" id="MF_01553">
    <property type="entry name" value="RNApol_bact_RpoY"/>
    <property type="match status" value="1"/>
</dbReference>
<dbReference type="InterPro" id="IPR009907">
    <property type="entry name" value="RpoY"/>
</dbReference>
<dbReference type="NCBIfam" id="NF010188">
    <property type="entry name" value="PRK13667.1"/>
    <property type="match status" value="1"/>
</dbReference>
<dbReference type="Pfam" id="PF07288">
    <property type="entry name" value="RpoY"/>
    <property type="match status" value="1"/>
</dbReference>
<proteinExistence type="evidence at protein level"/>
<evidence type="ECO:0000255" key="1">
    <source>
        <dbReference type="HAMAP-Rule" id="MF_01553"/>
    </source>
</evidence>
<evidence type="ECO:0000269" key="2">
    <source ref="2"/>
</evidence>
<protein>
    <recommendedName>
        <fullName evidence="1">DNA-directed RNA polymerase subunit epsilon</fullName>
        <shortName evidence="1">RNAP epsilon subunit</shortName>
        <ecNumber evidence="1">2.7.7.6</ecNumber>
    </recommendedName>
    <alternativeName>
        <fullName evidence="1">RNA polymerase epsilon subunit</fullName>
    </alternativeName>
    <alternativeName>
        <fullName evidence="1">Transcriptase subunit epsilon</fullName>
    </alternativeName>
</protein>
<sequence>MIYKVFYQETKDQSPRRESTKALYLNIDATDELDGRIKARRLVEDNTYYNVEFIELLSDKHLDYEKETGVFELTEF</sequence>
<comment type="function">
    <text evidence="1">A non-essential component of RNA polymerase (RNAP).</text>
</comment>
<comment type="catalytic activity">
    <reaction evidence="1">
        <text>RNA(n) + a ribonucleoside 5'-triphosphate = RNA(n+1) + diphosphate</text>
        <dbReference type="Rhea" id="RHEA:21248"/>
        <dbReference type="Rhea" id="RHEA-COMP:14527"/>
        <dbReference type="Rhea" id="RHEA-COMP:17342"/>
        <dbReference type="ChEBI" id="CHEBI:33019"/>
        <dbReference type="ChEBI" id="CHEBI:61557"/>
        <dbReference type="ChEBI" id="CHEBI:140395"/>
        <dbReference type="EC" id="2.7.7.6"/>
    </reaction>
</comment>
<comment type="subunit">
    <text evidence="1">RNAP is composed of a core of 2 alpha, a beta and a beta' subunit. The core is associated with a delta subunit, and at least one of epsilon or omega. When a sigma factor is associated with the core the holoenzyme is formed, which can initiate transcription.</text>
</comment>
<comment type="mass spectrometry"/>
<comment type="similarity">
    <text evidence="1">Belongs to the RNA polymerase subunit epsilon family.</text>
</comment>
<organism>
    <name type="scientific">Streptococcus pyogenes serotype M6 (strain ATCC BAA-946 / MGAS10394)</name>
    <dbReference type="NCBI Taxonomy" id="286636"/>
    <lineage>
        <taxon>Bacteria</taxon>
        <taxon>Bacillati</taxon>
        <taxon>Bacillota</taxon>
        <taxon>Bacilli</taxon>
        <taxon>Lactobacillales</taxon>
        <taxon>Streptococcaceae</taxon>
        <taxon>Streptococcus</taxon>
    </lineage>
</organism>
<reference key="1">
    <citation type="journal article" date="2004" name="J. Infect. Dis.">
        <title>Progress toward characterization of the group A Streptococcus metagenome: complete genome sequence of a macrolide-resistant serotype M6 strain.</title>
        <authorList>
            <person name="Banks D.J."/>
            <person name="Porcella S.F."/>
            <person name="Barbian K.D."/>
            <person name="Beres S.B."/>
            <person name="Philips L.E."/>
            <person name="Voyich J.M."/>
            <person name="DeLeo F.R."/>
            <person name="Martin J.M."/>
            <person name="Somerville G.A."/>
            <person name="Musser J.M."/>
        </authorList>
    </citation>
    <scope>NUCLEOTIDE SEQUENCE [LARGE SCALE GENOMIC DNA]</scope>
    <source>
        <strain>ATCC BAA-946 / MGAS10394</strain>
    </source>
</reference>
<reference key="2">
    <citation type="submission" date="2000-05" db="UniProtKB">
        <title>Two-dimensional gel electrophoresis map of Streptococcus pyogenes proteins.</title>
        <authorList>
            <person name="Hogan D.A."/>
            <person name="Du P."/>
            <person name="Stevenson T.I."/>
            <person name="Whitton M."/>
            <person name="Kilby G.W."/>
            <person name="Rogers J."/>
            <person name="VanBogelen R.A."/>
        </authorList>
    </citation>
    <scope>PROTEIN SEQUENCE OF 22-38</scope>
    <scope>MASS SPECTROMETRY</scope>
    <source>
        <strain>JRS4 / Serotype M6</strain>
    </source>
</reference>